<evidence type="ECO:0000255" key="1">
    <source>
        <dbReference type="HAMAP-Rule" id="MF_00682"/>
    </source>
</evidence>
<feature type="chain" id="PRO_1000131734" description="Co-chaperone protein HscB">
    <location>
        <begin position="1"/>
        <end position="176"/>
    </location>
</feature>
<feature type="domain" description="J" evidence="1">
    <location>
        <begin position="2"/>
        <end position="74"/>
    </location>
</feature>
<keyword id="KW-0143">Chaperone</keyword>
<protein>
    <recommendedName>
        <fullName evidence="1">Co-chaperone protein HscB</fullName>
    </recommendedName>
    <alternativeName>
        <fullName evidence="1">Hsc20</fullName>
    </alternativeName>
</protein>
<reference key="1">
    <citation type="journal article" date="2009" name="PLoS Genet.">
        <title>Organised genome dynamics in the Escherichia coli species results in highly diverse adaptive paths.</title>
        <authorList>
            <person name="Touchon M."/>
            <person name="Hoede C."/>
            <person name="Tenaillon O."/>
            <person name="Barbe V."/>
            <person name="Baeriswyl S."/>
            <person name="Bidet P."/>
            <person name="Bingen E."/>
            <person name="Bonacorsi S."/>
            <person name="Bouchier C."/>
            <person name="Bouvet O."/>
            <person name="Calteau A."/>
            <person name="Chiapello H."/>
            <person name="Clermont O."/>
            <person name="Cruveiller S."/>
            <person name="Danchin A."/>
            <person name="Diard M."/>
            <person name="Dossat C."/>
            <person name="Karoui M.E."/>
            <person name="Frapy E."/>
            <person name="Garry L."/>
            <person name="Ghigo J.M."/>
            <person name="Gilles A.M."/>
            <person name="Johnson J."/>
            <person name="Le Bouguenec C."/>
            <person name="Lescat M."/>
            <person name="Mangenot S."/>
            <person name="Martinez-Jehanne V."/>
            <person name="Matic I."/>
            <person name="Nassif X."/>
            <person name="Oztas S."/>
            <person name="Petit M.A."/>
            <person name="Pichon C."/>
            <person name="Rouy Z."/>
            <person name="Ruf C.S."/>
            <person name="Schneider D."/>
            <person name="Tourret J."/>
            <person name="Vacherie B."/>
            <person name="Vallenet D."/>
            <person name="Medigue C."/>
            <person name="Rocha E.P.C."/>
            <person name="Denamur E."/>
        </authorList>
    </citation>
    <scope>NUCLEOTIDE SEQUENCE [LARGE SCALE GENOMIC DNA]</scope>
    <source>
        <strain>IAI39 / ExPEC</strain>
    </source>
</reference>
<name>HSCB_ECO7I</name>
<comment type="function">
    <text evidence="1">Co-chaperone involved in the maturation of iron-sulfur cluster-containing proteins. Seems to help targeting proteins to be folded toward HscA.</text>
</comment>
<comment type="subunit">
    <text evidence="1">Interacts with HscA and stimulates its ATPase activity. Interacts with IscU.</text>
</comment>
<comment type="similarity">
    <text evidence="1">Belongs to the HscB family.</text>
</comment>
<accession>B7NRH6</accession>
<dbReference type="EMBL" id="CU928164">
    <property type="protein sequence ID" value="CAR18850.1"/>
    <property type="molecule type" value="Genomic_DNA"/>
</dbReference>
<dbReference type="RefSeq" id="WP_000384414.1">
    <property type="nucleotide sequence ID" value="NC_011750.1"/>
</dbReference>
<dbReference type="RefSeq" id="YP_002408666.1">
    <property type="nucleotide sequence ID" value="NC_011750.1"/>
</dbReference>
<dbReference type="SMR" id="B7NRH6"/>
<dbReference type="STRING" id="585057.ECIAI39_2728"/>
<dbReference type="KEGG" id="ect:ECIAI39_2728"/>
<dbReference type="PATRIC" id="fig|585057.6.peg.2836"/>
<dbReference type="HOGENOM" id="CLU_068529_2_0_6"/>
<dbReference type="Proteomes" id="UP000000749">
    <property type="component" value="Chromosome"/>
</dbReference>
<dbReference type="GO" id="GO:1990230">
    <property type="term" value="C:iron-sulfur cluster transfer complex"/>
    <property type="evidence" value="ECO:0007669"/>
    <property type="project" value="TreeGrafter"/>
</dbReference>
<dbReference type="GO" id="GO:0001671">
    <property type="term" value="F:ATPase activator activity"/>
    <property type="evidence" value="ECO:0007669"/>
    <property type="project" value="InterPro"/>
</dbReference>
<dbReference type="GO" id="GO:0051087">
    <property type="term" value="F:protein-folding chaperone binding"/>
    <property type="evidence" value="ECO:0007669"/>
    <property type="project" value="InterPro"/>
</dbReference>
<dbReference type="GO" id="GO:0044571">
    <property type="term" value="P:[2Fe-2S] cluster assembly"/>
    <property type="evidence" value="ECO:0007669"/>
    <property type="project" value="InterPro"/>
</dbReference>
<dbReference type="GO" id="GO:0051259">
    <property type="term" value="P:protein complex oligomerization"/>
    <property type="evidence" value="ECO:0007669"/>
    <property type="project" value="InterPro"/>
</dbReference>
<dbReference type="GO" id="GO:0006457">
    <property type="term" value="P:protein folding"/>
    <property type="evidence" value="ECO:0007669"/>
    <property type="project" value="UniProtKB-UniRule"/>
</dbReference>
<dbReference type="CDD" id="cd06257">
    <property type="entry name" value="DnaJ"/>
    <property type="match status" value="1"/>
</dbReference>
<dbReference type="FunFam" id="1.10.287.110:FF:000008">
    <property type="entry name" value="Co-chaperone protein HscB"/>
    <property type="match status" value="1"/>
</dbReference>
<dbReference type="FunFam" id="1.20.1280.20:FF:000001">
    <property type="entry name" value="Co-chaperone protein HscB"/>
    <property type="match status" value="1"/>
</dbReference>
<dbReference type="Gene3D" id="1.10.287.110">
    <property type="entry name" value="DnaJ domain"/>
    <property type="match status" value="1"/>
</dbReference>
<dbReference type="Gene3D" id="1.20.1280.20">
    <property type="entry name" value="HscB, C-terminal domain"/>
    <property type="match status" value="1"/>
</dbReference>
<dbReference type="HAMAP" id="MF_00682">
    <property type="entry name" value="HscB"/>
    <property type="match status" value="1"/>
</dbReference>
<dbReference type="InterPro" id="IPR001623">
    <property type="entry name" value="DnaJ_domain"/>
</dbReference>
<dbReference type="InterPro" id="IPR004640">
    <property type="entry name" value="HscB"/>
</dbReference>
<dbReference type="InterPro" id="IPR036386">
    <property type="entry name" value="HscB_C_sf"/>
</dbReference>
<dbReference type="InterPro" id="IPR009073">
    <property type="entry name" value="HscB_oligo_C"/>
</dbReference>
<dbReference type="InterPro" id="IPR036869">
    <property type="entry name" value="J_dom_sf"/>
</dbReference>
<dbReference type="NCBIfam" id="TIGR00714">
    <property type="entry name" value="hscB"/>
    <property type="match status" value="1"/>
</dbReference>
<dbReference type="NCBIfam" id="NF003449">
    <property type="entry name" value="PRK05014.1"/>
    <property type="match status" value="1"/>
</dbReference>
<dbReference type="PANTHER" id="PTHR14021">
    <property type="entry name" value="IRON-SULFUR CLUSTER CO-CHAPERONE PROTEIN HSCB"/>
    <property type="match status" value="1"/>
</dbReference>
<dbReference type="PANTHER" id="PTHR14021:SF15">
    <property type="entry name" value="IRON-SULFUR CLUSTER CO-CHAPERONE PROTEIN HSCB"/>
    <property type="match status" value="1"/>
</dbReference>
<dbReference type="Pfam" id="PF07743">
    <property type="entry name" value="HSCB_C"/>
    <property type="match status" value="1"/>
</dbReference>
<dbReference type="SMART" id="SM00271">
    <property type="entry name" value="DnaJ"/>
    <property type="match status" value="1"/>
</dbReference>
<dbReference type="SUPFAM" id="SSF46565">
    <property type="entry name" value="Chaperone J-domain"/>
    <property type="match status" value="1"/>
</dbReference>
<dbReference type="SUPFAM" id="SSF47144">
    <property type="entry name" value="HSC20 (HSCB), C-terminal oligomerisation domain"/>
    <property type="match status" value="1"/>
</dbReference>
<dbReference type="PROSITE" id="PS50076">
    <property type="entry name" value="DNAJ_2"/>
    <property type="match status" value="1"/>
</dbReference>
<gene>
    <name evidence="1" type="primary">hscB</name>
    <name type="ordered locus">ECIAI39_2728</name>
</gene>
<proteinExistence type="inferred from homology"/>
<sequence length="176" mass="20595">MDYFTLFGLPARYQLDTQALSLRFQDLQRQYHPDKFASGSQAEQLAAVQQSATINQAWQTLRHPLMRAEYLLSLHGFDLASEQHTVRDTAFLMEQLELREELDEIEQAKDEARLESFIKRVKKMFDTRHQLMVEQLDNETWDAAADTVRKLRFLDKLRSSAEQLEEKLLDFLISGS</sequence>
<organism>
    <name type="scientific">Escherichia coli O7:K1 (strain IAI39 / ExPEC)</name>
    <dbReference type="NCBI Taxonomy" id="585057"/>
    <lineage>
        <taxon>Bacteria</taxon>
        <taxon>Pseudomonadati</taxon>
        <taxon>Pseudomonadota</taxon>
        <taxon>Gammaproteobacteria</taxon>
        <taxon>Enterobacterales</taxon>
        <taxon>Enterobacteriaceae</taxon>
        <taxon>Escherichia</taxon>
    </lineage>
</organism>